<sequence length="232" mass="25592">MRKAVVVFSGGQDSTTCLIQAIKNYDEVHCITFDYGQRHKLEIEVAQSITKELGITAHKVMDVGLLNELAISSLTRDNIEVSHELQANGLPNSFVPGRNILFLTLSGIYAYQIGAEAVITGVCETDFSGYPDCRDEFVKSLNQSLVLGMDRALKIETPLMWLNKAETWALADQYKQLDFVREKTLTCYNGIIGDGCGNCPSCDLRRAGLEDYLTNKDAIMADLVAKQAEGQA</sequence>
<feature type="chain" id="PRO_0000246875" description="7-cyano-7-deazaguanine synthase">
    <location>
        <begin position="1"/>
        <end position="232"/>
    </location>
</feature>
<feature type="binding site" evidence="1">
    <location>
        <begin position="8"/>
        <end position="18"/>
    </location>
    <ligand>
        <name>ATP</name>
        <dbReference type="ChEBI" id="CHEBI:30616"/>
    </ligand>
</feature>
<feature type="binding site" evidence="1">
    <location>
        <position position="187"/>
    </location>
    <ligand>
        <name>Zn(2+)</name>
        <dbReference type="ChEBI" id="CHEBI:29105"/>
    </ligand>
</feature>
<feature type="binding site" evidence="1">
    <location>
        <position position="196"/>
    </location>
    <ligand>
        <name>Zn(2+)</name>
        <dbReference type="ChEBI" id="CHEBI:29105"/>
    </ligand>
</feature>
<feature type="binding site" evidence="1">
    <location>
        <position position="199"/>
    </location>
    <ligand>
        <name>Zn(2+)</name>
        <dbReference type="ChEBI" id="CHEBI:29105"/>
    </ligand>
</feature>
<feature type="binding site" evidence="1">
    <location>
        <position position="202"/>
    </location>
    <ligand>
        <name>Zn(2+)</name>
        <dbReference type="ChEBI" id="CHEBI:29105"/>
    </ligand>
</feature>
<protein>
    <recommendedName>
        <fullName evidence="1">7-cyano-7-deazaguanine synthase</fullName>
        <ecNumber evidence="1">6.3.4.20</ecNumber>
    </recommendedName>
    <alternativeName>
        <fullName evidence="1">7-cyano-7-carbaguanine synthase</fullName>
    </alternativeName>
    <alternativeName>
        <fullName evidence="1">PreQ(0) synthase</fullName>
    </alternativeName>
    <alternativeName>
        <fullName evidence="1">Queuosine biosynthesis protein QueC</fullName>
    </alternativeName>
</protein>
<gene>
    <name evidence="1" type="primary">queC</name>
    <name type="ordered locus">PBPRA0968</name>
</gene>
<name>QUEC_PHOPR</name>
<dbReference type="EC" id="6.3.4.20" evidence="1"/>
<dbReference type="EMBL" id="CR378666">
    <property type="protein sequence ID" value="CAG19379.1"/>
    <property type="molecule type" value="Genomic_DNA"/>
</dbReference>
<dbReference type="RefSeq" id="WP_011217713.1">
    <property type="nucleotide sequence ID" value="NC_006370.1"/>
</dbReference>
<dbReference type="SMR" id="Q6LTJ7"/>
<dbReference type="STRING" id="298386.PBPRA0968"/>
<dbReference type="KEGG" id="ppr:PBPRA0968"/>
<dbReference type="eggNOG" id="COG0603">
    <property type="taxonomic scope" value="Bacteria"/>
</dbReference>
<dbReference type="HOGENOM" id="CLU_081854_0_0_6"/>
<dbReference type="UniPathway" id="UPA00391"/>
<dbReference type="Proteomes" id="UP000000593">
    <property type="component" value="Chromosome 1"/>
</dbReference>
<dbReference type="GO" id="GO:0005524">
    <property type="term" value="F:ATP binding"/>
    <property type="evidence" value="ECO:0007669"/>
    <property type="project" value="UniProtKB-UniRule"/>
</dbReference>
<dbReference type="GO" id="GO:0016879">
    <property type="term" value="F:ligase activity, forming carbon-nitrogen bonds"/>
    <property type="evidence" value="ECO:0007669"/>
    <property type="project" value="UniProtKB-UniRule"/>
</dbReference>
<dbReference type="GO" id="GO:0008270">
    <property type="term" value="F:zinc ion binding"/>
    <property type="evidence" value="ECO:0007669"/>
    <property type="project" value="UniProtKB-UniRule"/>
</dbReference>
<dbReference type="GO" id="GO:0008616">
    <property type="term" value="P:queuosine biosynthetic process"/>
    <property type="evidence" value="ECO:0007669"/>
    <property type="project" value="UniProtKB-UniRule"/>
</dbReference>
<dbReference type="CDD" id="cd01995">
    <property type="entry name" value="QueC-like"/>
    <property type="match status" value="1"/>
</dbReference>
<dbReference type="FunFam" id="3.40.50.620:FF:000017">
    <property type="entry name" value="7-cyano-7-deazaguanine synthase"/>
    <property type="match status" value="1"/>
</dbReference>
<dbReference type="Gene3D" id="3.40.50.620">
    <property type="entry name" value="HUPs"/>
    <property type="match status" value="1"/>
</dbReference>
<dbReference type="HAMAP" id="MF_01633">
    <property type="entry name" value="QueC"/>
    <property type="match status" value="1"/>
</dbReference>
<dbReference type="InterPro" id="IPR018317">
    <property type="entry name" value="QueC"/>
</dbReference>
<dbReference type="InterPro" id="IPR014729">
    <property type="entry name" value="Rossmann-like_a/b/a_fold"/>
</dbReference>
<dbReference type="NCBIfam" id="TIGR00364">
    <property type="entry name" value="7-cyano-7-deazaguanine synthase QueC"/>
    <property type="match status" value="1"/>
</dbReference>
<dbReference type="NCBIfam" id="NF008317">
    <property type="entry name" value="PRK11106.1"/>
    <property type="match status" value="1"/>
</dbReference>
<dbReference type="PANTHER" id="PTHR42914">
    <property type="entry name" value="7-CYANO-7-DEAZAGUANINE SYNTHASE"/>
    <property type="match status" value="1"/>
</dbReference>
<dbReference type="PANTHER" id="PTHR42914:SF1">
    <property type="entry name" value="7-CYANO-7-DEAZAGUANINE SYNTHASE"/>
    <property type="match status" value="1"/>
</dbReference>
<dbReference type="Pfam" id="PF06508">
    <property type="entry name" value="QueC"/>
    <property type="match status" value="1"/>
</dbReference>
<dbReference type="PIRSF" id="PIRSF006293">
    <property type="entry name" value="ExsB"/>
    <property type="match status" value="1"/>
</dbReference>
<dbReference type="SUPFAM" id="SSF52402">
    <property type="entry name" value="Adenine nucleotide alpha hydrolases-like"/>
    <property type="match status" value="1"/>
</dbReference>
<proteinExistence type="inferred from homology"/>
<comment type="function">
    <text evidence="1">Catalyzes the ATP-dependent conversion of 7-carboxy-7-deazaguanine (CDG) to 7-cyano-7-deazaguanine (preQ(0)).</text>
</comment>
<comment type="catalytic activity">
    <reaction evidence="1">
        <text>7-carboxy-7-deazaguanine + NH4(+) + ATP = 7-cyano-7-deazaguanine + ADP + phosphate + H2O + H(+)</text>
        <dbReference type="Rhea" id="RHEA:27982"/>
        <dbReference type="ChEBI" id="CHEBI:15377"/>
        <dbReference type="ChEBI" id="CHEBI:15378"/>
        <dbReference type="ChEBI" id="CHEBI:28938"/>
        <dbReference type="ChEBI" id="CHEBI:30616"/>
        <dbReference type="ChEBI" id="CHEBI:43474"/>
        <dbReference type="ChEBI" id="CHEBI:45075"/>
        <dbReference type="ChEBI" id="CHEBI:61036"/>
        <dbReference type="ChEBI" id="CHEBI:456216"/>
        <dbReference type="EC" id="6.3.4.20"/>
    </reaction>
</comment>
<comment type="cofactor">
    <cofactor evidence="1">
        <name>Zn(2+)</name>
        <dbReference type="ChEBI" id="CHEBI:29105"/>
    </cofactor>
    <text evidence="1">Binds 1 zinc ion per subunit.</text>
</comment>
<comment type="pathway">
    <text evidence="1">Purine metabolism; 7-cyano-7-deazaguanine biosynthesis.</text>
</comment>
<comment type="similarity">
    <text evidence="1">Belongs to the QueC family.</text>
</comment>
<keyword id="KW-0067">ATP-binding</keyword>
<keyword id="KW-0436">Ligase</keyword>
<keyword id="KW-0479">Metal-binding</keyword>
<keyword id="KW-0547">Nucleotide-binding</keyword>
<keyword id="KW-0671">Queuosine biosynthesis</keyword>
<keyword id="KW-1185">Reference proteome</keyword>
<keyword id="KW-0862">Zinc</keyword>
<organism>
    <name type="scientific">Photobacterium profundum (strain SS9)</name>
    <dbReference type="NCBI Taxonomy" id="298386"/>
    <lineage>
        <taxon>Bacteria</taxon>
        <taxon>Pseudomonadati</taxon>
        <taxon>Pseudomonadota</taxon>
        <taxon>Gammaproteobacteria</taxon>
        <taxon>Vibrionales</taxon>
        <taxon>Vibrionaceae</taxon>
        <taxon>Photobacterium</taxon>
    </lineage>
</organism>
<reference key="1">
    <citation type="journal article" date="2005" name="Science">
        <title>Life at depth: Photobacterium profundum genome sequence and expression analysis.</title>
        <authorList>
            <person name="Vezzi A."/>
            <person name="Campanaro S."/>
            <person name="D'Angelo M."/>
            <person name="Simonato F."/>
            <person name="Vitulo N."/>
            <person name="Lauro F.M."/>
            <person name="Cestaro A."/>
            <person name="Malacrida G."/>
            <person name="Simionati B."/>
            <person name="Cannata N."/>
            <person name="Romualdi C."/>
            <person name="Bartlett D.H."/>
            <person name="Valle G."/>
        </authorList>
    </citation>
    <scope>NUCLEOTIDE SEQUENCE [LARGE SCALE GENOMIC DNA]</scope>
    <source>
        <strain>ATCC BAA-1253 / SS9</strain>
    </source>
</reference>
<accession>Q6LTJ7</accession>
<evidence type="ECO:0000255" key="1">
    <source>
        <dbReference type="HAMAP-Rule" id="MF_01633"/>
    </source>
</evidence>